<organism>
    <name type="scientific">Xylella fastidiosa (strain 9a5c)</name>
    <dbReference type="NCBI Taxonomy" id="160492"/>
    <lineage>
        <taxon>Bacteria</taxon>
        <taxon>Pseudomonadati</taxon>
        <taxon>Pseudomonadota</taxon>
        <taxon>Gammaproteobacteria</taxon>
        <taxon>Lysobacterales</taxon>
        <taxon>Lysobacteraceae</taxon>
        <taxon>Xylella</taxon>
    </lineage>
</organism>
<sequence length="568" mass="62837">MSSSSIEDIKGKSHRLRGSLLESLANPTTGALHESDQTLIKYHGSYQQDDRDLREERRRQKLEPAYQFMIRTRTPGGVITPQQWLQLDAIATRYANHSLRVTTRQAFQFHGVIKRELKATMQAINAALIDTLAACGDVNRNVQVAANPLLSRAHADLYTDAAHLSEHLLPNTRAYYEIWLDEKKVAGAGEEEEPIYGPHYLPRKFKIGFAAPPINDVDVFANDLGFIAVIVDNTLLGYNVAIGGGMGTTHGDPDTWPRVGNIIGFITRADLIAISTAIVTTQRDFGNRTLRKRARFKYTIDDRGLDCIVGEIQQRAGITLQPARPFVFEHNGDRYGWIEGEDRHWHLTLSLPAGRIADTESSPLLSGFRAIAQLGIGQFRMTPNQNVVIAGISPGQRATIDALVTQYGLDTGNRAPTALARHAMACVALPTCGLAMAEAERYLPDFNVKLQPILEKYGLAEKPILLRISGCPNGCSRPYLAEIALVGKAPGRYNLMLGGDQRGQRLNTLYRENITETEILAALEPLLGRYQQKRLPGEGFGDFLHRTGIIALPPYPTHRHVISSTLQA</sequence>
<keyword id="KW-0004">4Fe-4S</keyword>
<keyword id="KW-0028">Amino-acid biosynthesis</keyword>
<keyword id="KW-0198">Cysteine biosynthesis</keyword>
<keyword id="KW-0349">Heme</keyword>
<keyword id="KW-0408">Iron</keyword>
<keyword id="KW-0411">Iron-sulfur</keyword>
<keyword id="KW-0479">Metal-binding</keyword>
<keyword id="KW-0521">NADP</keyword>
<keyword id="KW-0560">Oxidoreductase</keyword>
<feature type="chain" id="PRO_0000388535" description="Sulfite reductase [NADPH] hemoprotein beta-component">
    <location>
        <begin position="1"/>
        <end position="568"/>
    </location>
</feature>
<feature type="binding site" evidence="1">
    <location>
        <position position="426"/>
    </location>
    <ligand>
        <name>[4Fe-4S] cluster</name>
        <dbReference type="ChEBI" id="CHEBI:49883"/>
    </ligand>
</feature>
<feature type="binding site" evidence="1">
    <location>
        <position position="432"/>
    </location>
    <ligand>
        <name>[4Fe-4S] cluster</name>
        <dbReference type="ChEBI" id="CHEBI:49883"/>
    </ligand>
</feature>
<feature type="binding site" evidence="1">
    <location>
        <position position="471"/>
    </location>
    <ligand>
        <name>[4Fe-4S] cluster</name>
        <dbReference type="ChEBI" id="CHEBI:49883"/>
    </ligand>
</feature>
<feature type="binding site" evidence="1">
    <location>
        <position position="475"/>
    </location>
    <ligand>
        <name>[4Fe-4S] cluster</name>
        <dbReference type="ChEBI" id="CHEBI:49883"/>
    </ligand>
</feature>
<feature type="binding site" description="axial binding residue" evidence="1">
    <location>
        <position position="475"/>
    </location>
    <ligand>
        <name>siroheme</name>
        <dbReference type="ChEBI" id="CHEBI:60052"/>
    </ligand>
    <ligandPart>
        <name>Fe</name>
        <dbReference type="ChEBI" id="CHEBI:18248"/>
    </ligandPart>
</feature>
<reference key="1">
    <citation type="journal article" date="2000" name="Nature">
        <title>The genome sequence of the plant pathogen Xylella fastidiosa.</title>
        <authorList>
            <person name="Simpson A.J.G."/>
            <person name="Reinach F.C."/>
            <person name="Arruda P."/>
            <person name="Abreu F.A."/>
            <person name="Acencio M."/>
            <person name="Alvarenga R."/>
            <person name="Alves L.M.C."/>
            <person name="Araya J.E."/>
            <person name="Baia G.S."/>
            <person name="Baptista C.S."/>
            <person name="Barros M.H."/>
            <person name="Bonaccorsi E.D."/>
            <person name="Bordin S."/>
            <person name="Bove J.M."/>
            <person name="Briones M.R.S."/>
            <person name="Bueno M.R.P."/>
            <person name="Camargo A.A."/>
            <person name="Camargo L.E.A."/>
            <person name="Carraro D.M."/>
            <person name="Carrer H."/>
            <person name="Colauto N.B."/>
            <person name="Colombo C."/>
            <person name="Costa F.F."/>
            <person name="Costa M.C.R."/>
            <person name="Costa-Neto C.M."/>
            <person name="Coutinho L.L."/>
            <person name="Cristofani M."/>
            <person name="Dias-Neto E."/>
            <person name="Docena C."/>
            <person name="El-Dorry H."/>
            <person name="Facincani A.P."/>
            <person name="Ferreira A.J.S."/>
            <person name="Ferreira V.C.A."/>
            <person name="Ferro J.A."/>
            <person name="Fraga J.S."/>
            <person name="Franca S.C."/>
            <person name="Franco M.C."/>
            <person name="Frohme M."/>
            <person name="Furlan L.R."/>
            <person name="Garnier M."/>
            <person name="Goldman G.H."/>
            <person name="Goldman M.H.S."/>
            <person name="Gomes S.L."/>
            <person name="Gruber A."/>
            <person name="Ho P.L."/>
            <person name="Hoheisel J.D."/>
            <person name="Junqueira M.L."/>
            <person name="Kemper E.L."/>
            <person name="Kitajima J.P."/>
            <person name="Krieger J.E."/>
            <person name="Kuramae E.E."/>
            <person name="Laigret F."/>
            <person name="Lambais M.R."/>
            <person name="Leite L.C.C."/>
            <person name="Lemos E.G.M."/>
            <person name="Lemos M.V.F."/>
            <person name="Lopes S.A."/>
            <person name="Lopes C.R."/>
            <person name="Machado J.A."/>
            <person name="Machado M.A."/>
            <person name="Madeira A.M.B.N."/>
            <person name="Madeira H.M.F."/>
            <person name="Marino C.L."/>
            <person name="Marques M.V."/>
            <person name="Martins E.A.L."/>
            <person name="Martins E.M.F."/>
            <person name="Matsukuma A.Y."/>
            <person name="Menck C.F.M."/>
            <person name="Miracca E.C."/>
            <person name="Miyaki C.Y."/>
            <person name="Monteiro-Vitorello C.B."/>
            <person name="Moon D.H."/>
            <person name="Nagai M.A."/>
            <person name="Nascimento A.L.T.O."/>
            <person name="Netto L.E.S."/>
            <person name="Nhani A. Jr."/>
            <person name="Nobrega F.G."/>
            <person name="Nunes L.R."/>
            <person name="Oliveira M.A."/>
            <person name="de Oliveira M.C."/>
            <person name="de Oliveira R.C."/>
            <person name="Palmieri D.A."/>
            <person name="Paris A."/>
            <person name="Peixoto B.R."/>
            <person name="Pereira G.A.G."/>
            <person name="Pereira H.A. Jr."/>
            <person name="Pesquero J.B."/>
            <person name="Quaggio R.B."/>
            <person name="Roberto P.G."/>
            <person name="Rodrigues V."/>
            <person name="de Rosa A.J.M."/>
            <person name="de Rosa V.E. Jr."/>
            <person name="de Sa R.G."/>
            <person name="Santelli R.V."/>
            <person name="Sawasaki H.E."/>
            <person name="da Silva A.C.R."/>
            <person name="da Silva A.M."/>
            <person name="da Silva F.R."/>
            <person name="Silva W.A. Jr."/>
            <person name="da Silveira J.F."/>
            <person name="Silvestri M.L.Z."/>
            <person name="Siqueira W.J."/>
            <person name="de Souza A.A."/>
            <person name="de Souza A.P."/>
            <person name="Terenzi M.F."/>
            <person name="Truffi D."/>
            <person name="Tsai S.M."/>
            <person name="Tsuhako M.H."/>
            <person name="Vallada H."/>
            <person name="Van Sluys M.A."/>
            <person name="Verjovski-Almeida S."/>
            <person name="Vettore A.L."/>
            <person name="Zago M.A."/>
            <person name="Zatz M."/>
            <person name="Meidanis J."/>
            <person name="Setubal J.C."/>
        </authorList>
    </citation>
    <scope>NUCLEOTIDE SEQUENCE [LARGE SCALE GENOMIC DNA]</scope>
    <source>
        <strain>9a5c</strain>
    </source>
</reference>
<protein>
    <recommendedName>
        <fullName evidence="1">Sulfite reductase [NADPH] hemoprotein beta-component</fullName>
        <shortName evidence="1">SiR-HP</shortName>
        <shortName evidence="1">SiRHP</shortName>
        <ecNumber evidence="1">1.8.1.2</ecNumber>
    </recommendedName>
</protein>
<gene>
    <name evidence="1" type="primary">cysI</name>
    <name type="ordered locus">XF_1498</name>
</gene>
<dbReference type="EC" id="1.8.1.2" evidence="1"/>
<dbReference type="EMBL" id="AE003849">
    <property type="protein sequence ID" value="AAF84307.1"/>
    <property type="status" value="ALT_INIT"/>
    <property type="molecule type" value="Genomic_DNA"/>
</dbReference>
<dbReference type="PIR" id="F82674">
    <property type="entry name" value="F82674"/>
</dbReference>
<dbReference type="RefSeq" id="WP_010893999.1">
    <property type="nucleotide sequence ID" value="NC_002488.3"/>
</dbReference>
<dbReference type="SMR" id="Q9PD81"/>
<dbReference type="STRING" id="160492.XF_1498"/>
<dbReference type="KEGG" id="xfa:XF_1498"/>
<dbReference type="PATRIC" id="fig|160492.11.peg.1580"/>
<dbReference type="eggNOG" id="COG0155">
    <property type="taxonomic scope" value="Bacteria"/>
</dbReference>
<dbReference type="HOGENOM" id="CLU_001975_3_2_6"/>
<dbReference type="UniPathway" id="UPA00140">
    <property type="reaction ID" value="UER00207"/>
</dbReference>
<dbReference type="Proteomes" id="UP000000812">
    <property type="component" value="Chromosome"/>
</dbReference>
<dbReference type="GO" id="GO:0009337">
    <property type="term" value="C:sulfite reductase complex (NADPH)"/>
    <property type="evidence" value="ECO:0007669"/>
    <property type="project" value="InterPro"/>
</dbReference>
<dbReference type="GO" id="GO:0051539">
    <property type="term" value="F:4 iron, 4 sulfur cluster binding"/>
    <property type="evidence" value="ECO:0007669"/>
    <property type="project" value="UniProtKB-KW"/>
</dbReference>
<dbReference type="GO" id="GO:0020037">
    <property type="term" value="F:heme binding"/>
    <property type="evidence" value="ECO:0007669"/>
    <property type="project" value="InterPro"/>
</dbReference>
<dbReference type="GO" id="GO:0046872">
    <property type="term" value="F:metal ion binding"/>
    <property type="evidence" value="ECO:0007669"/>
    <property type="project" value="UniProtKB-KW"/>
</dbReference>
<dbReference type="GO" id="GO:0050661">
    <property type="term" value="F:NADP binding"/>
    <property type="evidence" value="ECO:0007669"/>
    <property type="project" value="InterPro"/>
</dbReference>
<dbReference type="GO" id="GO:0050311">
    <property type="term" value="F:sulfite reductase (ferredoxin) activity"/>
    <property type="evidence" value="ECO:0007669"/>
    <property type="project" value="TreeGrafter"/>
</dbReference>
<dbReference type="GO" id="GO:0004783">
    <property type="term" value="F:sulfite reductase (NADPH) activity"/>
    <property type="evidence" value="ECO:0007669"/>
    <property type="project" value="UniProtKB-UniRule"/>
</dbReference>
<dbReference type="GO" id="GO:0019344">
    <property type="term" value="P:cysteine biosynthetic process"/>
    <property type="evidence" value="ECO:0007669"/>
    <property type="project" value="UniProtKB-KW"/>
</dbReference>
<dbReference type="GO" id="GO:0070814">
    <property type="term" value="P:hydrogen sulfide biosynthetic process"/>
    <property type="evidence" value="ECO:0007669"/>
    <property type="project" value="UniProtKB-UniRule"/>
</dbReference>
<dbReference type="GO" id="GO:0000103">
    <property type="term" value="P:sulfate assimilation"/>
    <property type="evidence" value="ECO:0007669"/>
    <property type="project" value="UniProtKB-UniRule"/>
</dbReference>
<dbReference type="FunFam" id="3.30.413.10:FF:000003">
    <property type="entry name" value="Sulfite reductase [NADPH] hemoprotein beta-component"/>
    <property type="match status" value="1"/>
</dbReference>
<dbReference type="Gene3D" id="3.30.413.10">
    <property type="entry name" value="Sulfite Reductase Hemoprotein, domain 1"/>
    <property type="match status" value="2"/>
</dbReference>
<dbReference type="HAMAP" id="MF_01540">
    <property type="entry name" value="CysI"/>
    <property type="match status" value="1"/>
</dbReference>
<dbReference type="InterPro" id="IPR011786">
    <property type="entry name" value="CysI"/>
</dbReference>
<dbReference type="InterPro" id="IPR005117">
    <property type="entry name" value="NiRdtase/SiRdtase_haem-b_fer"/>
</dbReference>
<dbReference type="InterPro" id="IPR036136">
    <property type="entry name" value="Nit/Sulf_reduc_fer-like_dom_sf"/>
</dbReference>
<dbReference type="InterPro" id="IPR006067">
    <property type="entry name" value="NO2/SO3_Rdtase_4Fe4S_dom"/>
</dbReference>
<dbReference type="InterPro" id="IPR045169">
    <property type="entry name" value="NO2/SO3_Rdtase_4Fe4S_prot"/>
</dbReference>
<dbReference type="InterPro" id="IPR045854">
    <property type="entry name" value="NO2/SO3_Rdtase_4Fe4S_sf"/>
</dbReference>
<dbReference type="InterPro" id="IPR006066">
    <property type="entry name" value="NO2/SO3_Rdtase_FeS/sirohaem_BS"/>
</dbReference>
<dbReference type="NCBIfam" id="TIGR02041">
    <property type="entry name" value="CysI"/>
    <property type="match status" value="1"/>
</dbReference>
<dbReference type="NCBIfam" id="NF010029">
    <property type="entry name" value="PRK13504.1"/>
    <property type="match status" value="1"/>
</dbReference>
<dbReference type="PANTHER" id="PTHR11493:SF47">
    <property type="entry name" value="SULFITE REDUCTASE [NADPH] SUBUNIT BETA"/>
    <property type="match status" value="1"/>
</dbReference>
<dbReference type="PANTHER" id="PTHR11493">
    <property type="entry name" value="SULFITE REDUCTASE [NADPH] SUBUNIT BETA-RELATED"/>
    <property type="match status" value="1"/>
</dbReference>
<dbReference type="Pfam" id="PF01077">
    <property type="entry name" value="NIR_SIR"/>
    <property type="match status" value="1"/>
</dbReference>
<dbReference type="Pfam" id="PF03460">
    <property type="entry name" value="NIR_SIR_ferr"/>
    <property type="match status" value="2"/>
</dbReference>
<dbReference type="PRINTS" id="PR00397">
    <property type="entry name" value="SIROHAEM"/>
</dbReference>
<dbReference type="SUPFAM" id="SSF56014">
    <property type="entry name" value="Nitrite and sulphite reductase 4Fe-4S domain-like"/>
    <property type="match status" value="2"/>
</dbReference>
<dbReference type="SUPFAM" id="SSF55124">
    <property type="entry name" value="Nitrite/Sulfite reductase N-terminal domain-like"/>
    <property type="match status" value="2"/>
</dbReference>
<dbReference type="PROSITE" id="PS00365">
    <property type="entry name" value="NIR_SIR"/>
    <property type="match status" value="1"/>
</dbReference>
<accession>Q9PD81</accession>
<evidence type="ECO:0000255" key="1">
    <source>
        <dbReference type="HAMAP-Rule" id="MF_01540"/>
    </source>
</evidence>
<evidence type="ECO:0000305" key="2"/>
<proteinExistence type="inferred from homology"/>
<name>CYSI_XYLFA</name>
<comment type="function">
    <text evidence="1">Component of the sulfite reductase complex that catalyzes the 6-electron reduction of sulfite to sulfide. This is one of several activities required for the biosynthesis of L-cysteine from sulfate.</text>
</comment>
<comment type="catalytic activity">
    <reaction evidence="1">
        <text>hydrogen sulfide + 3 NADP(+) + 3 H2O = sulfite + 3 NADPH + 4 H(+)</text>
        <dbReference type="Rhea" id="RHEA:13801"/>
        <dbReference type="ChEBI" id="CHEBI:15377"/>
        <dbReference type="ChEBI" id="CHEBI:15378"/>
        <dbReference type="ChEBI" id="CHEBI:17359"/>
        <dbReference type="ChEBI" id="CHEBI:29919"/>
        <dbReference type="ChEBI" id="CHEBI:57783"/>
        <dbReference type="ChEBI" id="CHEBI:58349"/>
        <dbReference type="EC" id="1.8.1.2"/>
    </reaction>
</comment>
<comment type="cofactor">
    <cofactor evidence="1">
        <name>siroheme</name>
        <dbReference type="ChEBI" id="CHEBI:60052"/>
    </cofactor>
    <text evidence="1">Binds 1 siroheme per subunit.</text>
</comment>
<comment type="cofactor">
    <cofactor evidence="1">
        <name>[4Fe-4S] cluster</name>
        <dbReference type="ChEBI" id="CHEBI:49883"/>
    </cofactor>
    <text evidence="1">Binds 1 [4Fe-4S] cluster per subunit.</text>
</comment>
<comment type="pathway">
    <text evidence="1">Sulfur metabolism; hydrogen sulfide biosynthesis; hydrogen sulfide from sulfite (NADPH route): step 1/1.</text>
</comment>
<comment type="subunit">
    <text evidence="1">Alpha(8)-beta(8). The alpha component is a flavoprotein, the beta component is a hemoprotein.</text>
</comment>
<comment type="similarity">
    <text evidence="1">Belongs to the nitrite and sulfite reductase 4Fe-4S domain family.</text>
</comment>
<comment type="sequence caution" evidence="2">
    <conflict type="erroneous initiation">
        <sequence resource="EMBL-CDS" id="AAF84307"/>
    </conflict>
</comment>